<protein>
    <recommendedName>
        <fullName evidence="1">Small ribosomal subunit protein uS11</fullName>
    </recommendedName>
    <alternativeName>
        <fullName evidence="2">30S ribosomal protein S11</fullName>
    </alternativeName>
</protein>
<dbReference type="EMBL" id="CP000503">
    <property type="protein sequence ID" value="ABM23032.1"/>
    <property type="molecule type" value="Genomic_DNA"/>
</dbReference>
<dbReference type="RefSeq" id="WP_006083577.1">
    <property type="nucleotide sequence ID" value="NC_008750.1"/>
</dbReference>
<dbReference type="SMR" id="A1RED7"/>
<dbReference type="GeneID" id="94726209"/>
<dbReference type="KEGG" id="shw:Sputw3181_0179"/>
<dbReference type="HOGENOM" id="CLU_072439_5_0_6"/>
<dbReference type="Proteomes" id="UP000002597">
    <property type="component" value="Chromosome"/>
</dbReference>
<dbReference type="GO" id="GO:1990904">
    <property type="term" value="C:ribonucleoprotein complex"/>
    <property type="evidence" value="ECO:0007669"/>
    <property type="project" value="UniProtKB-KW"/>
</dbReference>
<dbReference type="GO" id="GO:0005840">
    <property type="term" value="C:ribosome"/>
    <property type="evidence" value="ECO:0007669"/>
    <property type="project" value="UniProtKB-KW"/>
</dbReference>
<dbReference type="GO" id="GO:0019843">
    <property type="term" value="F:rRNA binding"/>
    <property type="evidence" value="ECO:0007669"/>
    <property type="project" value="UniProtKB-UniRule"/>
</dbReference>
<dbReference type="GO" id="GO:0003735">
    <property type="term" value="F:structural constituent of ribosome"/>
    <property type="evidence" value="ECO:0007669"/>
    <property type="project" value="InterPro"/>
</dbReference>
<dbReference type="GO" id="GO:0006412">
    <property type="term" value="P:translation"/>
    <property type="evidence" value="ECO:0007669"/>
    <property type="project" value="UniProtKB-UniRule"/>
</dbReference>
<dbReference type="FunFam" id="3.30.420.80:FF:000001">
    <property type="entry name" value="30S ribosomal protein S11"/>
    <property type="match status" value="1"/>
</dbReference>
<dbReference type="Gene3D" id="3.30.420.80">
    <property type="entry name" value="Ribosomal protein S11"/>
    <property type="match status" value="1"/>
</dbReference>
<dbReference type="HAMAP" id="MF_01310">
    <property type="entry name" value="Ribosomal_uS11"/>
    <property type="match status" value="1"/>
</dbReference>
<dbReference type="InterPro" id="IPR001971">
    <property type="entry name" value="Ribosomal_uS11"/>
</dbReference>
<dbReference type="InterPro" id="IPR019981">
    <property type="entry name" value="Ribosomal_uS11_bac-type"/>
</dbReference>
<dbReference type="InterPro" id="IPR018102">
    <property type="entry name" value="Ribosomal_uS11_CS"/>
</dbReference>
<dbReference type="InterPro" id="IPR036967">
    <property type="entry name" value="Ribosomal_uS11_sf"/>
</dbReference>
<dbReference type="NCBIfam" id="NF003698">
    <property type="entry name" value="PRK05309.1"/>
    <property type="match status" value="1"/>
</dbReference>
<dbReference type="NCBIfam" id="TIGR03632">
    <property type="entry name" value="uS11_bact"/>
    <property type="match status" value="1"/>
</dbReference>
<dbReference type="PANTHER" id="PTHR11759">
    <property type="entry name" value="40S RIBOSOMAL PROTEIN S14/30S RIBOSOMAL PROTEIN S11"/>
    <property type="match status" value="1"/>
</dbReference>
<dbReference type="Pfam" id="PF00411">
    <property type="entry name" value="Ribosomal_S11"/>
    <property type="match status" value="1"/>
</dbReference>
<dbReference type="PIRSF" id="PIRSF002131">
    <property type="entry name" value="Ribosomal_S11"/>
    <property type="match status" value="1"/>
</dbReference>
<dbReference type="SUPFAM" id="SSF53137">
    <property type="entry name" value="Translational machinery components"/>
    <property type="match status" value="1"/>
</dbReference>
<dbReference type="PROSITE" id="PS00054">
    <property type="entry name" value="RIBOSOMAL_S11"/>
    <property type="match status" value="1"/>
</dbReference>
<name>RS11_SHESW</name>
<sequence>MAKVPSRSPRKRVRKQVADGMAHIHASFNNTIVTITDRQGNALSWATSGGSGFRGSRKSTPFAAQVAAERAGAAAQDYGLKNLEVFVKGPGPGRESAIRALNAVGYKITNITDVTPIPHNGCRPPKKRRV</sequence>
<gene>
    <name evidence="1" type="primary">rpsK</name>
    <name type="ordered locus">Sputw3181_0179</name>
</gene>
<comment type="function">
    <text evidence="1">Located on the platform of the 30S subunit, it bridges several disparate RNA helices of the 16S rRNA. Forms part of the Shine-Dalgarno cleft in the 70S ribosome.</text>
</comment>
<comment type="subunit">
    <text evidence="1">Part of the 30S ribosomal subunit. Interacts with proteins S7 and S18. Binds to IF-3.</text>
</comment>
<comment type="similarity">
    <text evidence="1">Belongs to the universal ribosomal protein uS11 family.</text>
</comment>
<proteinExistence type="inferred from homology"/>
<accession>A1RED7</accession>
<organism>
    <name type="scientific">Shewanella sp. (strain W3-18-1)</name>
    <dbReference type="NCBI Taxonomy" id="351745"/>
    <lineage>
        <taxon>Bacteria</taxon>
        <taxon>Pseudomonadati</taxon>
        <taxon>Pseudomonadota</taxon>
        <taxon>Gammaproteobacteria</taxon>
        <taxon>Alteromonadales</taxon>
        <taxon>Shewanellaceae</taxon>
        <taxon>Shewanella</taxon>
    </lineage>
</organism>
<evidence type="ECO:0000255" key="1">
    <source>
        <dbReference type="HAMAP-Rule" id="MF_01310"/>
    </source>
</evidence>
<evidence type="ECO:0000305" key="2"/>
<reference key="1">
    <citation type="submission" date="2006-12" db="EMBL/GenBank/DDBJ databases">
        <title>Complete sequence of Shewanella sp. W3-18-1.</title>
        <authorList>
            <consortium name="US DOE Joint Genome Institute"/>
            <person name="Copeland A."/>
            <person name="Lucas S."/>
            <person name="Lapidus A."/>
            <person name="Barry K."/>
            <person name="Detter J.C."/>
            <person name="Glavina del Rio T."/>
            <person name="Hammon N."/>
            <person name="Israni S."/>
            <person name="Dalin E."/>
            <person name="Tice H."/>
            <person name="Pitluck S."/>
            <person name="Chain P."/>
            <person name="Malfatti S."/>
            <person name="Shin M."/>
            <person name="Vergez L."/>
            <person name="Schmutz J."/>
            <person name="Larimer F."/>
            <person name="Land M."/>
            <person name="Hauser L."/>
            <person name="Kyrpides N."/>
            <person name="Lykidis A."/>
            <person name="Tiedje J."/>
            <person name="Richardson P."/>
        </authorList>
    </citation>
    <scope>NUCLEOTIDE SEQUENCE [LARGE SCALE GENOMIC DNA]</scope>
    <source>
        <strain>W3-18-1</strain>
    </source>
</reference>
<feature type="chain" id="PRO_0000294855" description="Small ribosomal subunit protein uS11">
    <location>
        <begin position="1"/>
        <end position="130"/>
    </location>
</feature>
<keyword id="KW-0687">Ribonucleoprotein</keyword>
<keyword id="KW-0689">Ribosomal protein</keyword>
<keyword id="KW-0694">RNA-binding</keyword>
<keyword id="KW-0699">rRNA-binding</keyword>